<feature type="chain" id="PRO_0000293877" description="Small ribosomal subunit protein uS3">
    <location>
        <begin position="1"/>
        <end position="236"/>
    </location>
</feature>
<feature type="domain" description="KH type-2" evidence="1">
    <location>
        <begin position="38"/>
        <end position="106"/>
    </location>
</feature>
<feature type="region of interest" description="Disordered" evidence="2">
    <location>
        <begin position="211"/>
        <end position="236"/>
    </location>
</feature>
<reference key="1">
    <citation type="journal article" date="2005" name="Proc. Natl. Acad. Sci. U.S.A.">
        <title>The genome of Salinibacter ruber: convergence and gene exchange among hyperhalophilic bacteria and archaea.</title>
        <authorList>
            <person name="Mongodin E.F."/>
            <person name="Nelson K.E."/>
            <person name="Daugherty S."/>
            <person name="DeBoy R.T."/>
            <person name="Wister J."/>
            <person name="Khouri H."/>
            <person name="Weidman J."/>
            <person name="Walsh D.A."/>
            <person name="Papke R.T."/>
            <person name="Sanchez Perez G."/>
            <person name="Sharma A.K."/>
            <person name="Nesbo C.L."/>
            <person name="MacLeod D."/>
            <person name="Bapteste E."/>
            <person name="Doolittle W.F."/>
            <person name="Charlebois R.L."/>
            <person name="Legault B."/>
            <person name="Rodriguez-Valera F."/>
        </authorList>
    </citation>
    <scope>NUCLEOTIDE SEQUENCE [LARGE SCALE GENOMIC DNA]</scope>
    <source>
        <strain>DSM 13855 / CECT 5946 / M31</strain>
    </source>
</reference>
<sequence>MGQKTHPIGFRLGAIRGWDSNWYSETNFQDKLVEDEELRRYLHTRLKRAGLSRAVIERTPERVILTLHTSRPGVVIGRGGSEVEKLKGELETLTGKDIQINISEIKRPELDATLVAKNIVQQLEGRISFRRAMKQAMQAAMRMGAEGVRIRAAGRLGGAEMGRTEEYMEGRVPLHTIRADIDFAQETALTIYGTIGVKVWIHRGEILGKPDLSPNVQAQQRKMKESPQQRRQRRGG</sequence>
<organism>
    <name type="scientific">Salinibacter ruber (strain DSM 13855 / M31)</name>
    <dbReference type="NCBI Taxonomy" id="309807"/>
    <lineage>
        <taxon>Bacteria</taxon>
        <taxon>Pseudomonadati</taxon>
        <taxon>Rhodothermota</taxon>
        <taxon>Rhodothermia</taxon>
        <taxon>Rhodothermales</taxon>
        <taxon>Salinibacteraceae</taxon>
        <taxon>Salinibacter</taxon>
    </lineage>
</organism>
<protein>
    <recommendedName>
        <fullName evidence="1">Small ribosomal subunit protein uS3</fullName>
    </recommendedName>
    <alternativeName>
        <fullName evidence="3">30S ribosomal protein S3</fullName>
    </alternativeName>
</protein>
<dbReference type="EMBL" id="CP000159">
    <property type="protein sequence ID" value="ABC45618.1"/>
    <property type="molecule type" value="Genomic_DNA"/>
</dbReference>
<dbReference type="RefSeq" id="WP_011403801.1">
    <property type="nucleotide sequence ID" value="NC_007677.1"/>
</dbReference>
<dbReference type="RefSeq" id="YP_445173.1">
    <property type="nucleotide sequence ID" value="NC_007677.1"/>
</dbReference>
<dbReference type="SMR" id="Q2S3Q8"/>
<dbReference type="STRING" id="309807.SRU_1041"/>
<dbReference type="EnsemblBacteria" id="ABC45618">
    <property type="protein sequence ID" value="ABC45618"/>
    <property type="gene ID" value="SRU_1041"/>
</dbReference>
<dbReference type="GeneID" id="83727970"/>
<dbReference type="KEGG" id="sru:SRU_1041"/>
<dbReference type="PATRIC" id="fig|309807.25.peg.1079"/>
<dbReference type="eggNOG" id="COG0092">
    <property type="taxonomic scope" value="Bacteria"/>
</dbReference>
<dbReference type="HOGENOM" id="CLU_058591_0_2_10"/>
<dbReference type="OrthoDB" id="9806396at2"/>
<dbReference type="Proteomes" id="UP000008674">
    <property type="component" value="Chromosome"/>
</dbReference>
<dbReference type="GO" id="GO:0022627">
    <property type="term" value="C:cytosolic small ribosomal subunit"/>
    <property type="evidence" value="ECO:0007669"/>
    <property type="project" value="TreeGrafter"/>
</dbReference>
<dbReference type="GO" id="GO:0003729">
    <property type="term" value="F:mRNA binding"/>
    <property type="evidence" value="ECO:0007669"/>
    <property type="project" value="UniProtKB-UniRule"/>
</dbReference>
<dbReference type="GO" id="GO:0019843">
    <property type="term" value="F:rRNA binding"/>
    <property type="evidence" value="ECO:0007669"/>
    <property type="project" value="UniProtKB-UniRule"/>
</dbReference>
<dbReference type="GO" id="GO:0003735">
    <property type="term" value="F:structural constituent of ribosome"/>
    <property type="evidence" value="ECO:0007669"/>
    <property type="project" value="InterPro"/>
</dbReference>
<dbReference type="GO" id="GO:0006412">
    <property type="term" value="P:translation"/>
    <property type="evidence" value="ECO:0007669"/>
    <property type="project" value="UniProtKB-UniRule"/>
</dbReference>
<dbReference type="CDD" id="cd02412">
    <property type="entry name" value="KH-II_30S_S3"/>
    <property type="match status" value="1"/>
</dbReference>
<dbReference type="FunFam" id="3.30.300.20:FF:000001">
    <property type="entry name" value="30S ribosomal protein S3"/>
    <property type="match status" value="1"/>
</dbReference>
<dbReference type="Gene3D" id="3.30.300.20">
    <property type="match status" value="1"/>
</dbReference>
<dbReference type="Gene3D" id="3.30.1140.32">
    <property type="entry name" value="Ribosomal protein S3, C-terminal domain"/>
    <property type="match status" value="1"/>
</dbReference>
<dbReference type="HAMAP" id="MF_01309_B">
    <property type="entry name" value="Ribosomal_uS3_B"/>
    <property type="match status" value="1"/>
</dbReference>
<dbReference type="InterPro" id="IPR004087">
    <property type="entry name" value="KH_dom"/>
</dbReference>
<dbReference type="InterPro" id="IPR015946">
    <property type="entry name" value="KH_dom-like_a/b"/>
</dbReference>
<dbReference type="InterPro" id="IPR004044">
    <property type="entry name" value="KH_dom_type_2"/>
</dbReference>
<dbReference type="InterPro" id="IPR009019">
    <property type="entry name" value="KH_sf_prok-type"/>
</dbReference>
<dbReference type="InterPro" id="IPR036419">
    <property type="entry name" value="Ribosomal_S3_C_sf"/>
</dbReference>
<dbReference type="InterPro" id="IPR005704">
    <property type="entry name" value="Ribosomal_uS3_bac-typ"/>
</dbReference>
<dbReference type="InterPro" id="IPR001351">
    <property type="entry name" value="Ribosomal_uS3_C"/>
</dbReference>
<dbReference type="InterPro" id="IPR018280">
    <property type="entry name" value="Ribosomal_uS3_CS"/>
</dbReference>
<dbReference type="NCBIfam" id="TIGR01009">
    <property type="entry name" value="rpsC_bact"/>
    <property type="match status" value="1"/>
</dbReference>
<dbReference type="PANTHER" id="PTHR11760">
    <property type="entry name" value="30S/40S RIBOSOMAL PROTEIN S3"/>
    <property type="match status" value="1"/>
</dbReference>
<dbReference type="PANTHER" id="PTHR11760:SF19">
    <property type="entry name" value="SMALL RIBOSOMAL SUBUNIT PROTEIN US3C"/>
    <property type="match status" value="1"/>
</dbReference>
<dbReference type="Pfam" id="PF07650">
    <property type="entry name" value="KH_2"/>
    <property type="match status" value="1"/>
</dbReference>
<dbReference type="Pfam" id="PF00189">
    <property type="entry name" value="Ribosomal_S3_C"/>
    <property type="match status" value="1"/>
</dbReference>
<dbReference type="SMART" id="SM00322">
    <property type="entry name" value="KH"/>
    <property type="match status" value="1"/>
</dbReference>
<dbReference type="SUPFAM" id="SSF54814">
    <property type="entry name" value="Prokaryotic type KH domain (KH-domain type II)"/>
    <property type="match status" value="1"/>
</dbReference>
<dbReference type="SUPFAM" id="SSF54821">
    <property type="entry name" value="Ribosomal protein S3 C-terminal domain"/>
    <property type="match status" value="1"/>
</dbReference>
<dbReference type="PROSITE" id="PS50823">
    <property type="entry name" value="KH_TYPE_2"/>
    <property type="match status" value="1"/>
</dbReference>
<dbReference type="PROSITE" id="PS00548">
    <property type="entry name" value="RIBOSOMAL_S3"/>
    <property type="match status" value="1"/>
</dbReference>
<proteinExistence type="inferred from homology"/>
<gene>
    <name evidence="1" type="primary">rpsC</name>
    <name type="ordered locus">SRU_1041</name>
</gene>
<evidence type="ECO:0000255" key="1">
    <source>
        <dbReference type="HAMAP-Rule" id="MF_01309"/>
    </source>
</evidence>
<evidence type="ECO:0000256" key="2">
    <source>
        <dbReference type="SAM" id="MobiDB-lite"/>
    </source>
</evidence>
<evidence type="ECO:0000305" key="3"/>
<accession>Q2S3Q8</accession>
<keyword id="KW-1185">Reference proteome</keyword>
<keyword id="KW-0687">Ribonucleoprotein</keyword>
<keyword id="KW-0689">Ribosomal protein</keyword>
<keyword id="KW-0694">RNA-binding</keyword>
<keyword id="KW-0699">rRNA-binding</keyword>
<name>RS3_SALRD</name>
<comment type="function">
    <text evidence="1">Binds the lower part of the 30S subunit head. Binds mRNA in the 70S ribosome, positioning it for translation.</text>
</comment>
<comment type="subunit">
    <text evidence="1">Part of the 30S ribosomal subunit. Forms a tight complex with proteins S10 and S14.</text>
</comment>
<comment type="similarity">
    <text evidence="1">Belongs to the universal ribosomal protein uS3 family.</text>
</comment>